<evidence type="ECO:0000255" key="1">
    <source>
        <dbReference type="HAMAP-Rule" id="MF_00040"/>
    </source>
</evidence>
<organism>
    <name type="scientific">Escherichia coli O17:K52:H18 (strain UMN026 / ExPEC)</name>
    <dbReference type="NCBI Taxonomy" id="585056"/>
    <lineage>
        <taxon>Bacteria</taxon>
        <taxon>Pseudomonadati</taxon>
        <taxon>Pseudomonadota</taxon>
        <taxon>Gammaproteobacteria</taxon>
        <taxon>Enterobacterales</taxon>
        <taxon>Enterobacteriaceae</taxon>
        <taxon>Escherichia</taxon>
    </lineage>
</organism>
<dbReference type="EMBL" id="CU928163">
    <property type="protein sequence ID" value="CAR11389.1"/>
    <property type="molecule type" value="Genomic_DNA"/>
</dbReference>
<dbReference type="RefSeq" id="WP_000622418.1">
    <property type="nucleotide sequence ID" value="NC_011751.1"/>
</dbReference>
<dbReference type="RefSeq" id="YP_002410945.1">
    <property type="nucleotide sequence ID" value="NC_011751.1"/>
</dbReference>
<dbReference type="SMR" id="B7N839"/>
<dbReference type="STRING" id="585056.ECUMN_0169"/>
<dbReference type="GeneID" id="93777253"/>
<dbReference type="KEGG" id="eum:ECUMN_0169"/>
<dbReference type="PATRIC" id="fig|585056.7.peg.362"/>
<dbReference type="HOGENOM" id="CLU_073981_2_1_6"/>
<dbReference type="Proteomes" id="UP000007097">
    <property type="component" value="Chromosome"/>
</dbReference>
<dbReference type="GO" id="GO:0005829">
    <property type="term" value="C:cytosol"/>
    <property type="evidence" value="ECO:0007669"/>
    <property type="project" value="GOC"/>
</dbReference>
<dbReference type="GO" id="GO:0043023">
    <property type="term" value="F:ribosomal large subunit binding"/>
    <property type="evidence" value="ECO:0007669"/>
    <property type="project" value="TreeGrafter"/>
</dbReference>
<dbReference type="GO" id="GO:0002184">
    <property type="term" value="P:cytoplasmic translational termination"/>
    <property type="evidence" value="ECO:0007669"/>
    <property type="project" value="TreeGrafter"/>
</dbReference>
<dbReference type="CDD" id="cd00520">
    <property type="entry name" value="RRF"/>
    <property type="match status" value="1"/>
</dbReference>
<dbReference type="FunFam" id="1.10.132.20:FF:000001">
    <property type="entry name" value="Ribosome-recycling factor"/>
    <property type="match status" value="1"/>
</dbReference>
<dbReference type="FunFam" id="3.30.1360.40:FF:000001">
    <property type="entry name" value="Ribosome-recycling factor"/>
    <property type="match status" value="1"/>
</dbReference>
<dbReference type="Gene3D" id="3.30.1360.40">
    <property type="match status" value="1"/>
</dbReference>
<dbReference type="Gene3D" id="1.10.132.20">
    <property type="entry name" value="Ribosome-recycling factor"/>
    <property type="match status" value="1"/>
</dbReference>
<dbReference type="HAMAP" id="MF_00040">
    <property type="entry name" value="RRF"/>
    <property type="match status" value="1"/>
</dbReference>
<dbReference type="InterPro" id="IPR002661">
    <property type="entry name" value="Ribosome_recyc_fac"/>
</dbReference>
<dbReference type="InterPro" id="IPR023584">
    <property type="entry name" value="Ribosome_recyc_fac_dom"/>
</dbReference>
<dbReference type="InterPro" id="IPR036191">
    <property type="entry name" value="RRF_sf"/>
</dbReference>
<dbReference type="NCBIfam" id="TIGR00496">
    <property type="entry name" value="frr"/>
    <property type="match status" value="1"/>
</dbReference>
<dbReference type="PANTHER" id="PTHR20982:SF3">
    <property type="entry name" value="MITOCHONDRIAL RIBOSOME RECYCLING FACTOR PSEUDO 1"/>
    <property type="match status" value="1"/>
</dbReference>
<dbReference type="PANTHER" id="PTHR20982">
    <property type="entry name" value="RIBOSOME RECYCLING FACTOR"/>
    <property type="match status" value="1"/>
</dbReference>
<dbReference type="Pfam" id="PF01765">
    <property type="entry name" value="RRF"/>
    <property type="match status" value="1"/>
</dbReference>
<dbReference type="SUPFAM" id="SSF55194">
    <property type="entry name" value="Ribosome recycling factor, RRF"/>
    <property type="match status" value="1"/>
</dbReference>
<proteinExistence type="inferred from homology"/>
<name>RRF_ECOLU</name>
<gene>
    <name evidence="1" type="primary">frr</name>
    <name type="ordered locus">ECUMN_0169</name>
</gene>
<protein>
    <recommendedName>
        <fullName evidence="1">Ribosome-recycling factor</fullName>
        <shortName evidence="1">RRF</shortName>
    </recommendedName>
    <alternativeName>
        <fullName evidence="1">Ribosome-releasing factor</fullName>
    </alternativeName>
</protein>
<keyword id="KW-0007">Acetylation</keyword>
<keyword id="KW-0963">Cytoplasm</keyword>
<keyword id="KW-0648">Protein biosynthesis</keyword>
<accession>B7N839</accession>
<comment type="function">
    <text evidence="1">Responsible for the release of ribosomes from messenger RNA at the termination of protein biosynthesis. May increase the efficiency of translation by recycling ribosomes from one round of translation to another.</text>
</comment>
<comment type="subcellular location">
    <subcellularLocation>
        <location evidence="1">Cytoplasm</location>
    </subcellularLocation>
</comment>
<comment type="similarity">
    <text evidence="1">Belongs to the RRF family.</text>
</comment>
<reference key="1">
    <citation type="journal article" date="2009" name="PLoS Genet.">
        <title>Organised genome dynamics in the Escherichia coli species results in highly diverse adaptive paths.</title>
        <authorList>
            <person name="Touchon M."/>
            <person name="Hoede C."/>
            <person name="Tenaillon O."/>
            <person name="Barbe V."/>
            <person name="Baeriswyl S."/>
            <person name="Bidet P."/>
            <person name="Bingen E."/>
            <person name="Bonacorsi S."/>
            <person name="Bouchier C."/>
            <person name="Bouvet O."/>
            <person name="Calteau A."/>
            <person name="Chiapello H."/>
            <person name="Clermont O."/>
            <person name="Cruveiller S."/>
            <person name="Danchin A."/>
            <person name="Diard M."/>
            <person name="Dossat C."/>
            <person name="Karoui M.E."/>
            <person name="Frapy E."/>
            <person name="Garry L."/>
            <person name="Ghigo J.M."/>
            <person name="Gilles A.M."/>
            <person name="Johnson J."/>
            <person name="Le Bouguenec C."/>
            <person name="Lescat M."/>
            <person name="Mangenot S."/>
            <person name="Martinez-Jehanne V."/>
            <person name="Matic I."/>
            <person name="Nassif X."/>
            <person name="Oztas S."/>
            <person name="Petit M.A."/>
            <person name="Pichon C."/>
            <person name="Rouy Z."/>
            <person name="Ruf C.S."/>
            <person name="Schneider D."/>
            <person name="Tourret J."/>
            <person name="Vacherie B."/>
            <person name="Vallenet D."/>
            <person name="Medigue C."/>
            <person name="Rocha E.P.C."/>
            <person name="Denamur E."/>
        </authorList>
    </citation>
    <scope>NUCLEOTIDE SEQUENCE [LARGE SCALE GENOMIC DNA]</scope>
    <source>
        <strain>UMN026 / ExPEC</strain>
    </source>
</reference>
<feature type="chain" id="PRO_1000194926" description="Ribosome-recycling factor">
    <location>
        <begin position="1"/>
        <end position="185"/>
    </location>
</feature>
<feature type="modified residue" description="N6-acetyllysine" evidence="1">
    <location>
        <position position="162"/>
    </location>
</feature>
<sequence>MISDIRKDAEVRMDKCVEAFKTQISKIRTGRASPSLLDGIVVEYYGTPTPLRQLASVTVEDSRTLKINVFDRSMSPAVEKAIMASDLGLNPNSAGSDIRVPLPPLTEERRKDLTKIVRGEAEQARVAVRNVRRDANDKVKALLKDKEISEDDDRRSQDDVQKLTDAAIKKIEAALADKEAELMQF</sequence>